<keyword id="KW-0963">Cytoplasm</keyword>
<keyword id="KW-0251">Elongation factor</keyword>
<keyword id="KW-0648">Protein biosynthesis</keyword>
<keyword id="KW-1185">Reference proteome</keyword>
<sequence>MAEITAKLVKELREKSGAGVMDAKKALVETDGDLDKAIELLREKGMAKAAKKADRVAAEGLTGVYVDGNVAAVIEVNAETDFVAKNDQFVTLVNETAKVIAEGRPSNNEEALALTMPSGETLEQAFVTATATIGEKISFRRFALVEKTDEQHFGAYQHNGGRIGVITVVEGGDDALAKQVSMHVAAMKPTVLSYTELDAQFVHDELAQLNHKIEQDNESRAMVNKPALPFLKYGSKAQLTDEVIAQAEEDIKAELAAEGKPEKIWDKIVPGKMDRFMLDNTKVDQEYTLLAQVYIMDDSKTVEAYLESVNAKAVAFVRFEVGEGIEKASNDFEAEVAATMAAALEK</sequence>
<feature type="chain" id="PRO_0000161204" description="Elongation factor Ts">
    <location>
        <begin position="1"/>
        <end position="346"/>
    </location>
</feature>
<feature type="region of interest" description="Involved in Mg(2+) ion dislocation from EF-Tu" evidence="1">
    <location>
        <begin position="80"/>
        <end position="83"/>
    </location>
</feature>
<protein>
    <recommendedName>
        <fullName evidence="1">Elongation factor Ts</fullName>
        <shortName evidence="1">EF-Ts</shortName>
    </recommendedName>
</protein>
<accession>P64056</accession>
<accession>Q8DXL9</accession>
<accession>Q8E389</accession>
<gene>
    <name evidence="1" type="primary">tsf</name>
    <name type="ordered locus">SAG1831</name>
</gene>
<reference key="1">
    <citation type="journal article" date="2002" name="Proc. Natl. Acad. Sci. U.S.A.">
        <title>Complete genome sequence and comparative genomic analysis of an emerging human pathogen, serotype V Streptococcus agalactiae.</title>
        <authorList>
            <person name="Tettelin H."/>
            <person name="Masignani V."/>
            <person name="Cieslewicz M.J."/>
            <person name="Eisen J.A."/>
            <person name="Peterson S.N."/>
            <person name="Wessels M.R."/>
            <person name="Paulsen I.T."/>
            <person name="Nelson K.E."/>
            <person name="Margarit I."/>
            <person name="Read T.D."/>
            <person name="Madoff L.C."/>
            <person name="Wolf A.M."/>
            <person name="Beanan M.J."/>
            <person name="Brinkac L.M."/>
            <person name="Daugherty S.C."/>
            <person name="DeBoy R.T."/>
            <person name="Durkin A.S."/>
            <person name="Kolonay J.F."/>
            <person name="Madupu R."/>
            <person name="Lewis M.R."/>
            <person name="Radune D."/>
            <person name="Fedorova N.B."/>
            <person name="Scanlan D."/>
            <person name="Khouri H.M."/>
            <person name="Mulligan S."/>
            <person name="Carty H.A."/>
            <person name="Cline R.T."/>
            <person name="Van Aken S.E."/>
            <person name="Gill J."/>
            <person name="Scarselli M."/>
            <person name="Mora M."/>
            <person name="Iacobini E.T."/>
            <person name="Brettoni C."/>
            <person name="Galli G."/>
            <person name="Mariani M."/>
            <person name="Vegni F."/>
            <person name="Maione D."/>
            <person name="Rinaudo D."/>
            <person name="Rappuoli R."/>
            <person name="Telford J.L."/>
            <person name="Kasper D.L."/>
            <person name="Grandi G."/>
            <person name="Fraser C.M."/>
        </authorList>
    </citation>
    <scope>NUCLEOTIDE SEQUENCE [LARGE SCALE GENOMIC DNA]</scope>
    <source>
        <strain>ATCC BAA-611 / 2603 V/R</strain>
    </source>
</reference>
<organism>
    <name type="scientific">Streptococcus agalactiae serotype V (strain ATCC BAA-611 / 2603 V/R)</name>
    <dbReference type="NCBI Taxonomy" id="208435"/>
    <lineage>
        <taxon>Bacteria</taxon>
        <taxon>Bacillati</taxon>
        <taxon>Bacillota</taxon>
        <taxon>Bacilli</taxon>
        <taxon>Lactobacillales</taxon>
        <taxon>Streptococcaceae</taxon>
        <taxon>Streptococcus</taxon>
    </lineage>
</organism>
<dbReference type="EMBL" id="AE009948">
    <property type="protein sequence ID" value="AAN00694.1"/>
    <property type="molecule type" value="Genomic_DNA"/>
</dbReference>
<dbReference type="RefSeq" id="NP_688821.1">
    <property type="nucleotide sequence ID" value="NC_004116.1"/>
</dbReference>
<dbReference type="RefSeq" id="WP_000808080.1">
    <property type="nucleotide sequence ID" value="NC_004116.1"/>
</dbReference>
<dbReference type="SMR" id="P64056"/>
<dbReference type="STRING" id="208435.SAG1831"/>
<dbReference type="GeneID" id="66886668"/>
<dbReference type="KEGG" id="sag:SAG1831"/>
<dbReference type="PATRIC" id="fig|208435.3.peg.1839"/>
<dbReference type="HOGENOM" id="CLU_047155_0_1_9"/>
<dbReference type="OrthoDB" id="9808348at2"/>
<dbReference type="Proteomes" id="UP000000821">
    <property type="component" value="Chromosome"/>
</dbReference>
<dbReference type="GO" id="GO:0005737">
    <property type="term" value="C:cytoplasm"/>
    <property type="evidence" value="ECO:0007669"/>
    <property type="project" value="UniProtKB-SubCell"/>
</dbReference>
<dbReference type="GO" id="GO:0003746">
    <property type="term" value="F:translation elongation factor activity"/>
    <property type="evidence" value="ECO:0007669"/>
    <property type="project" value="UniProtKB-UniRule"/>
</dbReference>
<dbReference type="CDD" id="cd14275">
    <property type="entry name" value="UBA_EF-Ts"/>
    <property type="match status" value="1"/>
</dbReference>
<dbReference type="FunFam" id="1.10.286.20:FF:000004">
    <property type="entry name" value="Elongation factor Ts"/>
    <property type="match status" value="1"/>
</dbReference>
<dbReference type="FunFam" id="1.10.8.10:FF:000001">
    <property type="entry name" value="Elongation factor Ts"/>
    <property type="match status" value="1"/>
</dbReference>
<dbReference type="FunFam" id="3.30.479.20:FF:000013">
    <property type="entry name" value="Elongation factor Ts"/>
    <property type="match status" value="1"/>
</dbReference>
<dbReference type="Gene3D" id="1.10.286.20">
    <property type="match status" value="1"/>
</dbReference>
<dbReference type="Gene3D" id="1.10.8.10">
    <property type="entry name" value="DNA helicase RuvA subunit, C-terminal domain"/>
    <property type="match status" value="1"/>
</dbReference>
<dbReference type="Gene3D" id="3.30.479.20">
    <property type="entry name" value="Elongation factor Ts, dimerisation domain"/>
    <property type="match status" value="2"/>
</dbReference>
<dbReference type="HAMAP" id="MF_00050">
    <property type="entry name" value="EF_Ts"/>
    <property type="match status" value="1"/>
</dbReference>
<dbReference type="InterPro" id="IPR036402">
    <property type="entry name" value="EF-Ts_dimer_sf"/>
</dbReference>
<dbReference type="InterPro" id="IPR001816">
    <property type="entry name" value="Transl_elong_EFTs/EF1B"/>
</dbReference>
<dbReference type="InterPro" id="IPR014039">
    <property type="entry name" value="Transl_elong_EFTs/EF1B_dimer"/>
</dbReference>
<dbReference type="InterPro" id="IPR018101">
    <property type="entry name" value="Transl_elong_Ts_CS"/>
</dbReference>
<dbReference type="InterPro" id="IPR009060">
    <property type="entry name" value="UBA-like_sf"/>
</dbReference>
<dbReference type="NCBIfam" id="TIGR00116">
    <property type="entry name" value="tsf"/>
    <property type="match status" value="1"/>
</dbReference>
<dbReference type="PANTHER" id="PTHR11741">
    <property type="entry name" value="ELONGATION FACTOR TS"/>
    <property type="match status" value="1"/>
</dbReference>
<dbReference type="PANTHER" id="PTHR11741:SF0">
    <property type="entry name" value="ELONGATION FACTOR TS, MITOCHONDRIAL"/>
    <property type="match status" value="1"/>
</dbReference>
<dbReference type="Pfam" id="PF00889">
    <property type="entry name" value="EF_TS"/>
    <property type="match status" value="2"/>
</dbReference>
<dbReference type="SUPFAM" id="SSF54713">
    <property type="entry name" value="Elongation factor Ts (EF-Ts), dimerisation domain"/>
    <property type="match status" value="1"/>
</dbReference>
<dbReference type="SUPFAM" id="SSF46934">
    <property type="entry name" value="UBA-like"/>
    <property type="match status" value="1"/>
</dbReference>
<dbReference type="PROSITE" id="PS01126">
    <property type="entry name" value="EF_TS_1"/>
    <property type="match status" value="1"/>
</dbReference>
<dbReference type="PROSITE" id="PS01127">
    <property type="entry name" value="EF_TS_2"/>
    <property type="match status" value="1"/>
</dbReference>
<proteinExistence type="inferred from homology"/>
<evidence type="ECO:0000255" key="1">
    <source>
        <dbReference type="HAMAP-Rule" id="MF_00050"/>
    </source>
</evidence>
<name>EFTS_STRA5</name>
<comment type="function">
    <text evidence="1">Associates with the EF-Tu.GDP complex and induces the exchange of GDP to GTP. It remains bound to the aminoacyl-tRNA.EF-Tu.GTP complex up to the GTP hydrolysis stage on the ribosome.</text>
</comment>
<comment type="subcellular location">
    <subcellularLocation>
        <location evidence="1">Cytoplasm</location>
    </subcellularLocation>
</comment>
<comment type="similarity">
    <text evidence="1">Belongs to the EF-Ts family.</text>
</comment>